<keyword id="KW-0004">4Fe-4S</keyword>
<keyword id="KW-0963">Cytoplasm</keyword>
<keyword id="KW-1015">Disulfide bond</keyword>
<keyword id="KW-0408">Iron</keyword>
<keyword id="KW-0411">Iron-sulfur</keyword>
<keyword id="KW-0479">Metal-binding</keyword>
<keyword id="KW-0489">Methyltransferase</keyword>
<keyword id="KW-1185">Reference proteome</keyword>
<keyword id="KW-0698">rRNA processing</keyword>
<keyword id="KW-0949">S-adenosyl-L-methionine</keyword>
<keyword id="KW-0808">Transferase</keyword>
<keyword id="KW-0819">tRNA processing</keyword>
<proteinExistence type="inferred from homology"/>
<protein>
    <recommendedName>
        <fullName evidence="1">Probable dual-specificity RNA methyltransferase RlmN</fullName>
        <ecNumber evidence="1">2.1.1.192</ecNumber>
    </recommendedName>
    <alternativeName>
        <fullName evidence="1">23S rRNA (adenine(2503)-C(2))-methyltransferase</fullName>
    </alternativeName>
    <alternativeName>
        <fullName evidence="1">23S rRNA m2A2503 methyltransferase</fullName>
    </alternativeName>
    <alternativeName>
        <fullName evidence="1">Ribosomal RNA large subunit methyltransferase N</fullName>
    </alternativeName>
    <alternativeName>
        <fullName evidence="1">tRNA (adenine(37)-C(2))-methyltransferase</fullName>
    </alternativeName>
    <alternativeName>
        <fullName evidence="1">tRNA m2A37 methyltransferase</fullName>
    </alternativeName>
</protein>
<feature type="chain" id="PRO_0000350105" description="Probable dual-specificity RNA methyltransferase RlmN">
    <location>
        <begin position="1"/>
        <end position="376"/>
    </location>
</feature>
<feature type="domain" description="Radical SAM core" evidence="2">
    <location>
        <begin position="102"/>
        <end position="346"/>
    </location>
</feature>
<feature type="active site" description="Proton acceptor" evidence="1">
    <location>
        <position position="96"/>
    </location>
</feature>
<feature type="active site" description="S-methylcysteine intermediate" evidence="1">
    <location>
        <position position="351"/>
    </location>
</feature>
<feature type="binding site" evidence="1">
    <location>
        <position position="116"/>
    </location>
    <ligand>
        <name>[4Fe-4S] cluster</name>
        <dbReference type="ChEBI" id="CHEBI:49883"/>
        <note>4Fe-4S-S-AdoMet</note>
    </ligand>
</feature>
<feature type="binding site" evidence="1">
    <location>
        <position position="120"/>
    </location>
    <ligand>
        <name>[4Fe-4S] cluster</name>
        <dbReference type="ChEBI" id="CHEBI:49883"/>
        <note>4Fe-4S-S-AdoMet</note>
    </ligand>
</feature>
<feature type="binding site" evidence="1">
    <location>
        <position position="123"/>
    </location>
    <ligand>
        <name>[4Fe-4S] cluster</name>
        <dbReference type="ChEBI" id="CHEBI:49883"/>
        <note>4Fe-4S-S-AdoMet</note>
    </ligand>
</feature>
<feature type="binding site" evidence="1">
    <location>
        <begin position="171"/>
        <end position="172"/>
    </location>
    <ligand>
        <name>S-adenosyl-L-methionine</name>
        <dbReference type="ChEBI" id="CHEBI:59789"/>
    </ligand>
</feature>
<feature type="binding site" evidence="1">
    <location>
        <position position="203"/>
    </location>
    <ligand>
        <name>S-adenosyl-L-methionine</name>
        <dbReference type="ChEBI" id="CHEBI:59789"/>
    </ligand>
</feature>
<feature type="binding site" evidence="1">
    <location>
        <begin position="226"/>
        <end position="228"/>
    </location>
    <ligand>
        <name>S-adenosyl-L-methionine</name>
        <dbReference type="ChEBI" id="CHEBI:59789"/>
    </ligand>
</feature>
<feature type="binding site" evidence="1">
    <location>
        <position position="308"/>
    </location>
    <ligand>
        <name>S-adenosyl-L-methionine</name>
        <dbReference type="ChEBI" id="CHEBI:59789"/>
    </ligand>
</feature>
<feature type="disulfide bond" description="(transient)" evidence="1">
    <location>
        <begin position="109"/>
        <end position="351"/>
    </location>
</feature>
<organism>
    <name type="scientific">Chloroflexus aurantiacus (strain ATCC 29366 / DSM 635 / J-10-fl)</name>
    <dbReference type="NCBI Taxonomy" id="324602"/>
    <lineage>
        <taxon>Bacteria</taxon>
        <taxon>Bacillati</taxon>
        <taxon>Chloroflexota</taxon>
        <taxon>Chloroflexia</taxon>
        <taxon>Chloroflexales</taxon>
        <taxon>Chloroflexineae</taxon>
        <taxon>Chloroflexaceae</taxon>
        <taxon>Chloroflexus</taxon>
    </lineage>
</organism>
<dbReference type="EC" id="2.1.1.192" evidence="1"/>
<dbReference type="EMBL" id="CP000909">
    <property type="protein sequence ID" value="ABY36140.1"/>
    <property type="molecule type" value="Genomic_DNA"/>
</dbReference>
<dbReference type="RefSeq" id="WP_012258793.1">
    <property type="nucleotide sequence ID" value="NC_010175.1"/>
</dbReference>
<dbReference type="RefSeq" id="YP_001636529.1">
    <property type="nucleotide sequence ID" value="NC_010175.1"/>
</dbReference>
<dbReference type="SMR" id="A9WFY6"/>
<dbReference type="FunCoup" id="A9WFY6">
    <property type="interactions" value="461"/>
</dbReference>
<dbReference type="STRING" id="324602.Caur_2941"/>
<dbReference type="EnsemblBacteria" id="ABY36140">
    <property type="protein sequence ID" value="ABY36140"/>
    <property type="gene ID" value="Caur_2941"/>
</dbReference>
<dbReference type="KEGG" id="cau:Caur_2941"/>
<dbReference type="PATRIC" id="fig|324602.8.peg.3312"/>
<dbReference type="eggNOG" id="COG0820">
    <property type="taxonomic scope" value="Bacteria"/>
</dbReference>
<dbReference type="HOGENOM" id="CLU_029101_0_1_0"/>
<dbReference type="InParanoid" id="A9WFY6"/>
<dbReference type="Proteomes" id="UP000002008">
    <property type="component" value="Chromosome"/>
</dbReference>
<dbReference type="GO" id="GO:0005737">
    <property type="term" value="C:cytoplasm"/>
    <property type="evidence" value="ECO:0007669"/>
    <property type="project" value="UniProtKB-SubCell"/>
</dbReference>
<dbReference type="GO" id="GO:0051539">
    <property type="term" value="F:4 iron, 4 sulfur cluster binding"/>
    <property type="evidence" value="ECO:0007669"/>
    <property type="project" value="UniProtKB-UniRule"/>
</dbReference>
<dbReference type="GO" id="GO:0046872">
    <property type="term" value="F:metal ion binding"/>
    <property type="evidence" value="ECO:0007669"/>
    <property type="project" value="UniProtKB-KW"/>
</dbReference>
<dbReference type="GO" id="GO:0070040">
    <property type="term" value="F:rRNA (adenine(2503)-C2-)-methyltransferase activity"/>
    <property type="evidence" value="ECO:0007669"/>
    <property type="project" value="UniProtKB-UniRule"/>
</dbReference>
<dbReference type="GO" id="GO:0019843">
    <property type="term" value="F:rRNA binding"/>
    <property type="evidence" value="ECO:0007669"/>
    <property type="project" value="UniProtKB-UniRule"/>
</dbReference>
<dbReference type="GO" id="GO:0002935">
    <property type="term" value="F:tRNA (adenine(37)-C2)-methyltransferase activity"/>
    <property type="evidence" value="ECO:0007669"/>
    <property type="project" value="UniProtKB-UniRule"/>
</dbReference>
<dbReference type="GO" id="GO:0000049">
    <property type="term" value="F:tRNA binding"/>
    <property type="evidence" value="ECO:0007669"/>
    <property type="project" value="UniProtKB-UniRule"/>
</dbReference>
<dbReference type="GO" id="GO:0070475">
    <property type="term" value="P:rRNA base methylation"/>
    <property type="evidence" value="ECO:0000318"/>
    <property type="project" value="GO_Central"/>
</dbReference>
<dbReference type="GO" id="GO:0030488">
    <property type="term" value="P:tRNA methylation"/>
    <property type="evidence" value="ECO:0000318"/>
    <property type="project" value="GO_Central"/>
</dbReference>
<dbReference type="CDD" id="cd01335">
    <property type="entry name" value="Radical_SAM"/>
    <property type="match status" value="1"/>
</dbReference>
<dbReference type="FunFam" id="3.20.20.70:FF:000014">
    <property type="entry name" value="Probable dual-specificity RNA methyltransferase RlmN"/>
    <property type="match status" value="1"/>
</dbReference>
<dbReference type="Gene3D" id="1.10.150.530">
    <property type="match status" value="1"/>
</dbReference>
<dbReference type="Gene3D" id="3.20.20.70">
    <property type="entry name" value="Aldolase class I"/>
    <property type="match status" value="1"/>
</dbReference>
<dbReference type="HAMAP" id="MF_01849">
    <property type="entry name" value="RNA_methyltr_RlmN"/>
    <property type="match status" value="1"/>
</dbReference>
<dbReference type="InterPro" id="IPR013785">
    <property type="entry name" value="Aldolase_TIM"/>
</dbReference>
<dbReference type="InterPro" id="IPR040072">
    <property type="entry name" value="Methyltransferase_A"/>
</dbReference>
<dbReference type="InterPro" id="IPR048641">
    <property type="entry name" value="RlmN_N"/>
</dbReference>
<dbReference type="InterPro" id="IPR027492">
    <property type="entry name" value="RNA_MTrfase_RlmN"/>
</dbReference>
<dbReference type="InterPro" id="IPR004383">
    <property type="entry name" value="rRNA_lsu_MTrfase_RlmN/Cfr"/>
</dbReference>
<dbReference type="InterPro" id="IPR007197">
    <property type="entry name" value="rSAM"/>
</dbReference>
<dbReference type="NCBIfam" id="NF011031">
    <property type="entry name" value="PRK14461.1"/>
    <property type="match status" value="1"/>
</dbReference>
<dbReference type="NCBIfam" id="TIGR00048">
    <property type="entry name" value="rRNA_mod_RlmN"/>
    <property type="match status" value="1"/>
</dbReference>
<dbReference type="PANTHER" id="PTHR30544">
    <property type="entry name" value="23S RRNA METHYLTRANSFERASE"/>
    <property type="match status" value="1"/>
</dbReference>
<dbReference type="PANTHER" id="PTHR30544:SF5">
    <property type="entry name" value="RADICAL SAM CORE DOMAIN-CONTAINING PROTEIN"/>
    <property type="match status" value="1"/>
</dbReference>
<dbReference type="Pfam" id="PF04055">
    <property type="entry name" value="Radical_SAM"/>
    <property type="match status" value="1"/>
</dbReference>
<dbReference type="Pfam" id="PF21016">
    <property type="entry name" value="RlmN_N"/>
    <property type="match status" value="1"/>
</dbReference>
<dbReference type="PIRSF" id="PIRSF006004">
    <property type="entry name" value="CHP00048"/>
    <property type="match status" value="1"/>
</dbReference>
<dbReference type="SFLD" id="SFLDF00275">
    <property type="entry name" value="adenosine_C2_methyltransferase"/>
    <property type="match status" value="1"/>
</dbReference>
<dbReference type="SFLD" id="SFLDS00029">
    <property type="entry name" value="Radical_SAM"/>
    <property type="match status" value="1"/>
</dbReference>
<dbReference type="SUPFAM" id="SSF102114">
    <property type="entry name" value="Radical SAM enzymes"/>
    <property type="match status" value="1"/>
</dbReference>
<dbReference type="PROSITE" id="PS51918">
    <property type="entry name" value="RADICAL_SAM"/>
    <property type="match status" value="1"/>
</dbReference>
<evidence type="ECO:0000255" key="1">
    <source>
        <dbReference type="HAMAP-Rule" id="MF_01849"/>
    </source>
</evidence>
<evidence type="ECO:0000255" key="2">
    <source>
        <dbReference type="PROSITE-ProRule" id="PRU01266"/>
    </source>
</evidence>
<accession>A9WFY6</accession>
<name>RLMN_CHLAA</name>
<sequence>MHYAMEQRCLYDYNLSELTELLQSWGEPAFRARQLYRHLYVNLARQVDQMTDLPLALRSRLAEIPFSTLRCEQVQIGDNGMTRKALFRLPDGAVVETVLMVYPDRSTVCVSTQAGCGMGCVFCATGQLGLLRNLSSGEIVAQAIWASQELRAMGMAGPTGRVSNLVFMGMGEPFANYDRWWQAVERLHDPQGFNLGARSMTVSTVGLVKGIERLANERLPINLAISLHAPDDALRSELMPVNRRYPIADLMAATRNYIAKTRRRVSFEYVLLQGKNDHPHQAIALARLLRHSAPRGPLLFHVNLIPWNPVPGTPLGRSEWERVTTFQQILTDYGIPCTVRVERGVEIAAACGQLAGRHSVPLNTVEQEIPARNVTG</sequence>
<comment type="function">
    <text evidence="1">Specifically methylates position 2 of adenine 2503 in 23S rRNA and position 2 of adenine 37 in tRNAs.</text>
</comment>
<comment type="catalytic activity">
    <reaction evidence="1">
        <text>adenosine(2503) in 23S rRNA + 2 reduced [2Fe-2S]-[ferredoxin] + 2 S-adenosyl-L-methionine = 2-methyladenosine(2503) in 23S rRNA + 5'-deoxyadenosine + L-methionine + 2 oxidized [2Fe-2S]-[ferredoxin] + S-adenosyl-L-homocysteine</text>
        <dbReference type="Rhea" id="RHEA:42916"/>
        <dbReference type="Rhea" id="RHEA-COMP:10000"/>
        <dbReference type="Rhea" id="RHEA-COMP:10001"/>
        <dbReference type="Rhea" id="RHEA-COMP:10152"/>
        <dbReference type="Rhea" id="RHEA-COMP:10282"/>
        <dbReference type="ChEBI" id="CHEBI:17319"/>
        <dbReference type="ChEBI" id="CHEBI:33737"/>
        <dbReference type="ChEBI" id="CHEBI:33738"/>
        <dbReference type="ChEBI" id="CHEBI:57844"/>
        <dbReference type="ChEBI" id="CHEBI:57856"/>
        <dbReference type="ChEBI" id="CHEBI:59789"/>
        <dbReference type="ChEBI" id="CHEBI:74411"/>
        <dbReference type="ChEBI" id="CHEBI:74497"/>
        <dbReference type="EC" id="2.1.1.192"/>
    </reaction>
</comment>
<comment type="catalytic activity">
    <reaction evidence="1">
        <text>adenosine(37) in tRNA + 2 reduced [2Fe-2S]-[ferredoxin] + 2 S-adenosyl-L-methionine = 2-methyladenosine(37) in tRNA + 5'-deoxyadenosine + L-methionine + 2 oxidized [2Fe-2S]-[ferredoxin] + S-adenosyl-L-homocysteine</text>
        <dbReference type="Rhea" id="RHEA:43332"/>
        <dbReference type="Rhea" id="RHEA-COMP:10000"/>
        <dbReference type="Rhea" id="RHEA-COMP:10001"/>
        <dbReference type="Rhea" id="RHEA-COMP:10162"/>
        <dbReference type="Rhea" id="RHEA-COMP:10485"/>
        <dbReference type="ChEBI" id="CHEBI:17319"/>
        <dbReference type="ChEBI" id="CHEBI:33737"/>
        <dbReference type="ChEBI" id="CHEBI:33738"/>
        <dbReference type="ChEBI" id="CHEBI:57844"/>
        <dbReference type="ChEBI" id="CHEBI:57856"/>
        <dbReference type="ChEBI" id="CHEBI:59789"/>
        <dbReference type="ChEBI" id="CHEBI:74411"/>
        <dbReference type="ChEBI" id="CHEBI:74497"/>
        <dbReference type="EC" id="2.1.1.192"/>
    </reaction>
</comment>
<comment type="cofactor">
    <cofactor evidence="1">
        <name>[4Fe-4S] cluster</name>
        <dbReference type="ChEBI" id="CHEBI:49883"/>
    </cofactor>
    <text evidence="1">Binds 1 [4Fe-4S] cluster. The cluster is coordinated with 3 cysteines and an exchangeable S-adenosyl-L-methionine.</text>
</comment>
<comment type="subcellular location">
    <subcellularLocation>
        <location evidence="1">Cytoplasm</location>
    </subcellularLocation>
</comment>
<comment type="miscellaneous">
    <text evidence="1">Reaction proceeds by a ping-pong mechanism involving intermediate methylation of a conserved cysteine residue.</text>
</comment>
<comment type="similarity">
    <text evidence="1">Belongs to the radical SAM superfamily. RlmN family.</text>
</comment>
<reference key="1">
    <citation type="journal article" date="2011" name="BMC Genomics">
        <title>Complete genome sequence of the filamentous anoxygenic phototrophic bacterium Chloroflexus aurantiacus.</title>
        <authorList>
            <person name="Tang K.H."/>
            <person name="Barry K."/>
            <person name="Chertkov O."/>
            <person name="Dalin E."/>
            <person name="Han C.S."/>
            <person name="Hauser L.J."/>
            <person name="Honchak B.M."/>
            <person name="Karbach L.E."/>
            <person name="Land M.L."/>
            <person name="Lapidus A."/>
            <person name="Larimer F.W."/>
            <person name="Mikhailova N."/>
            <person name="Pitluck S."/>
            <person name="Pierson B.K."/>
            <person name="Blankenship R.E."/>
        </authorList>
    </citation>
    <scope>NUCLEOTIDE SEQUENCE [LARGE SCALE GENOMIC DNA]</scope>
    <source>
        <strain>ATCC 29366 / DSM 635 / J-10-fl</strain>
    </source>
</reference>
<gene>
    <name evidence="1" type="primary">rlmN</name>
    <name type="ordered locus">Caur_2941</name>
</gene>